<comment type="function">
    <text evidence="1">Cell wall formation. Adds enolpyruvyl to UDP-N-acetylglucosamine.</text>
</comment>
<comment type="catalytic activity">
    <reaction evidence="1">
        <text>phosphoenolpyruvate + UDP-N-acetyl-alpha-D-glucosamine = UDP-N-acetyl-3-O-(1-carboxyvinyl)-alpha-D-glucosamine + phosphate</text>
        <dbReference type="Rhea" id="RHEA:18681"/>
        <dbReference type="ChEBI" id="CHEBI:43474"/>
        <dbReference type="ChEBI" id="CHEBI:57705"/>
        <dbReference type="ChEBI" id="CHEBI:58702"/>
        <dbReference type="ChEBI" id="CHEBI:68483"/>
        <dbReference type="EC" id="2.5.1.7"/>
    </reaction>
</comment>
<comment type="pathway">
    <text evidence="1">Cell wall biogenesis; peptidoglycan biosynthesis.</text>
</comment>
<comment type="subcellular location">
    <subcellularLocation>
        <location evidence="1">Cytoplasm</location>
    </subcellularLocation>
</comment>
<comment type="similarity">
    <text evidence="1">Belongs to the EPSP synthase family. MurA subfamily.</text>
</comment>
<sequence length="423" mass="45601">MDKIIIEGGQTRLEGEVVIEGAKNAVLPLLAASILPSKGKTILRNVPILSDVFTMNNVVRGLDIRVDFNEAANEITVDASGHILDEAPYEYVSQMRASIVVLGPILARNGHAKVSMPGGCTIGSRPINLHLKGLEAMGATITQKGGDITAQADRLQGAMIYMDFPSVGATQNLMMAATLADGVTTIENAAREPEIVDLAQFLNKMGARIRGAGTETLTITGVTSLHGVEHDVVQDRIEAGTFMVAAAMTSGNVLIRDAVWEHNRPLISKLMEMGVSVTEEEYGIRVQANTPKLKPVTVKTLPHPGFPTDMQAQFTALMAVVNGESTMVETVFENRFQHLEEMRRMGLQSEILRETAMIHGGRQLQGAPVMSTDLRASAALILTGIVAQGVTIVNNLVHLDRGYYQFHEKLAKLGATISRSSEV</sequence>
<proteinExistence type="inferred from homology"/>
<evidence type="ECO:0000255" key="1">
    <source>
        <dbReference type="HAMAP-Rule" id="MF_00111"/>
    </source>
</evidence>
<protein>
    <recommendedName>
        <fullName evidence="1">UDP-N-acetylglucosamine 1-carboxyvinyltransferase 1</fullName>
        <ecNumber evidence="1">2.5.1.7</ecNumber>
    </recommendedName>
    <alternativeName>
        <fullName evidence="1">Enoylpyruvate transferase 1</fullName>
    </alternativeName>
    <alternativeName>
        <fullName evidence="1">UDP-N-acetylglucosamine enolpyruvyl transferase 1</fullName>
        <shortName evidence="1">EPT 1</shortName>
    </alternativeName>
</protein>
<reference key="1">
    <citation type="journal article" date="2002" name="Proc. Natl. Acad. Sci. U.S.A.">
        <title>Genome sequence of a serotype M3 strain of group A Streptococcus: phage-encoded toxins, the high-virulence phenotype, and clone emergence.</title>
        <authorList>
            <person name="Beres S.B."/>
            <person name="Sylva G.L."/>
            <person name="Barbian K.D."/>
            <person name="Lei B."/>
            <person name="Hoff J.S."/>
            <person name="Mammarella N.D."/>
            <person name="Liu M.-Y."/>
            <person name="Smoot J.C."/>
            <person name="Porcella S.F."/>
            <person name="Parkins L.D."/>
            <person name="Campbell D.S."/>
            <person name="Smith T.M."/>
            <person name="McCormick J.K."/>
            <person name="Leung D.Y.M."/>
            <person name="Schlievert P.M."/>
            <person name="Musser J.M."/>
        </authorList>
    </citation>
    <scope>NUCLEOTIDE SEQUENCE [LARGE SCALE GENOMIC DNA]</scope>
    <source>
        <strain>ATCC BAA-595 / MGAS315</strain>
    </source>
</reference>
<dbReference type="EC" id="2.5.1.7" evidence="1"/>
<dbReference type="EMBL" id="AE014074">
    <property type="protein sequence ID" value="AAM79109.1"/>
    <property type="molecule type" value="Genomic_DNA"/>
</dbReference>
<dbReference type="RefSeq" id="WP_002990414.1">
    <property type="nucleotide sequence ID" value="NC_004070.1"/>
</dbReference>
<dbReference type="SMR" id="P0DC44"/>
<dbReference type="GeneID" id="69901111"/>
<dbReference type="KEGG" id="spg:SpyM3_0502"/>
<dbReference type="HOGENOM" id="CLU_027387_0_0_9"/>
<dbReference type="UniPathway" id="UPA00219"/>
<dbReference type="Proteomes" id="UP000000564">
    <property type="component" value="Chromosome"/>
</dbReference>
<dbReference type="GO" id="GO:0005737">
    <property type="term" value="C:cytoplasm"/>
    <property type="evidence" value="ECO:0007669"/>
    <property type="project" value="UniProtKB-SubCell"/>
</dbReference>
<dbReference type="GO" id="GO:0008760">
    <property type="term" value="F:UDP-N-acetylglucosamine 1-carboxyvinyltransferase activity"/>
    <property type="evidence" value="ECO:0007669"/>
    <property type="project" value="UniProtKB-UniRule"/>
</dbReference>
<dbReference type="GO" id="GO:0051301">
    <property type="term" value="P:cell division"/>
    <property type="evidence" value="ECO:0007669"/>
    <property type="project" value="UniProtKB-KW"/>
</dbReference>
<dbReference type="GO" id="GO:0071555">
    <property type="term" value="P:cell wall organization"/>
    <property type="evidence" value="ECO:0007669"/>
    <property type="project" value="UniProtKB-KW"/>
</dbReference>
<dbReference type="GO" id="GO:0009252">
    <property type="term" value="P:peptidoglycan biosynthetic process"/>
    <property type="evidence" value="ECO:0007669"/>
    <property type="project" value="UniProtKB-UniRule"/>
</dbReference>
<dbReference type="GO" id="GO:0008360">
    <property type="term" value="P:regulation of cell shape"/>
    <property type="evidence" value="ECO:0007669"/>
    <property type="project" value="UniProtKB-KW"/>
</dbReference>
<dbReference type="GO" id="GO:0019277">
    <property type="term" value="P:UDP-N-acetylgalactosamine biosynthetic process"/>
    <property type="evidence" value="ECO:0007669"/>
    <property type="project" value="InterPro"/>
</dbReference>
<dbReference type="CDD" id="cd01555">
    <property type="entry name" value="UdpNAET"/>
    <property type="match status" value="1"/>
</dbReference>
<dbReference type="FunFam" id="3.65.10.10:FF:000001">
    <property type="entry name" value="UDP-N-acetylglucosamine 1-carboxyvinyltransferase"/>
    <property type="match status" value="1"/>
</dbReference>
<dbReference type="Gene3D" id="3.65.10.10">
    <property type="entry name" value="Enolpyruvate transferase domain"/>
    <property type="match status" value="2"/>
</dbReference>
<dbReference type="HAMAP" id="MF_00111">
    <property type="entry name" value="MurA"/>
    <property type="match status" value="1"/>
</dbReference>
<dbReference type="InterPro" id="IPR001986">
    <property type="entry name" value="Enolpyruvate_Tfrase_dom"/>
</dbReference>
<dbReference type="InterPro" id="IPR036968">
    <property type="entry name" value="Enolpyruvate_Tfrase_sf"/>
</dbReference>
<dbReference type="InterPro" id="IPR050068">
    <property type="entry name" value="MurA_subfamily"/>
</dbReference>
<dbReference type="InterPro" id="IPR013792">
    <property type="entry name" value="RNA3'P_cycl/enolpyr_Trfase_a/b"/>
</dbReference>
<dbReference type="InterPro" id="IPR005750">
    <property type="entry name" value="UDP_GlcNAc_COvinyl_MurA"/>
</dbReference>
<dbReference type="NCBIfam" id="TIGR01072">
    <property type="entry name" value="murA"/>
    <property type="match status" value="1"/>
</dbReference>
<dbReference type="NCBIfam" id="NF006873">
    <property type="entry name" value="PRK09369.1"/>
    <property type="match status" value="1"/>
</dbReference>
<dbReference type="PANTHER" id="PTHR43783">
    <property type="entry name" value="UDP-N-ACETYLGLUCOSAMINE 1-CARBOXYVINYLTRANSFERASE"/>
    <property type="match status" value="1"/>
</dbReference>
<dbReference type="PANTHER" id="PTHR43783:SF1">
    <property type="entry name" value="UDP-N-ACETYLGLUCOSAMINE 1-CARBOXYVINYLTRANSFERASE"/>
    <property type="match status" value="1"/>
</dbReference>
<dbReference type="Pfam" id="PF00275">
    <property type="entry name" value="EPSP_synthase"/>
    <property type="match status" value="1"/>
</dbReference>
<dbReference type="SUPFAM" id="SSF55205">
    <property type="entry name" value="EPT/RTPC-like"/>
    <property type="match status" value="1"/>
</dbReference>
<keyword id="KW-0131">Cell cycle</keyword>
<keyword id="KW-0132">Cell division</keyword>
<keyword id="KW-0133">Cell shape</keyword>
<keyword id="KW-0961">Cell wall biogenesis/degradation</keyword>
<keyword id="KW-0963">Cytoplasm</keyword>
<keyword id="KW-0573">Peptidoglycan synthesis</keyword>
<keyword id="KW-0670">Pyruvate</keyword>
<keyword id="KW-0808">Transferase</keyword>
<organism>
    <name type="scientific">Streptococcus pyogenes serotype M3 (strain ATCC BAA-595 / MGAS315)</name>
    <dbReference type="NCBI Taxonomy" id="198466"/>
    <lineage>
        <taxon>Bacteria</taxon>
        <taxon>Bacillati</taxon>
        <taxon>Bacillota</taxon>
        <taxon>Bacilli</taxon>
        <taxon>Lactobacillales</taxon>
        <taxon>Streptococcaceae</taxon>
        <taxon>Streptococcus</taxon>
    </lineage>
</organism>
<feature type="chain" id="PRO_0000178936" description="UDP-N-acetylglucosamine 1-carboxyvinyltransferase 1">
    <location>
        <begin position="1"/>
        <end position="423"/>
    </location>
</feature>
<feature type="active site" description="Proton donor" evidence="1">
    <location>
        <position position="120"/>
    </location>
</feature>
<feature type="binding site" evidence="1">
    <location>
        <begin position="23"/>
        <end position="24"/>
    </location>
    <ligand>
        <name>phosphoenolpyruvate</name>
        <dbReference type="ChEBI" id="CHEBI:58702"/>
    </ligand>
</feature>
<feature type="binding site" evidence="1">
    <location>
        <position position="96"/>
    </location>
    <ligand>
        <name>UDP-N-acetyl-alpha-D-glucosamine</name>
        <dbReference type="ChEBI" id="CHEBI:57705"/>
    </ligand>
</feature>
<feature type="binding site" evidence="1">
    <location>
        <position position="309"/>
    </location>
    <ligand>
        <name>UDP-N-acetyl-alpha-D-glucosamine</name>
        <dbReference type="ChEBI" id="CHEBI:57705"/>
    </ligand>
</feature>
<feature type="binding site" evidence="1">
    <location>
        <position position="331"/>
    </location>
    <ligand>
        <name>UDP-N-acetyl-alpha-D-glucosamine</name>
        <dbReference type="ChEBI" id="CHEBI:57705"/>
    </ligand>
</feature>
<feature type="modified residue" description="2-(S-cysteinyl)pyruvic acid O-phosphothioketal" evidence="1">
    <location>
        <position position="120"/>
    </location>
</feature>
<name>MURA1_STRP3</name>
<accession>P0DC44</accession>
<accession>Q8K825</accession>
<gene>
    <name evidence="1" type="primary">murA1</name>
    <name type="synonym">murA</name>
    <name type="ordered locus">SpyM3_0502</name>
</gene>